<protein>
    <recommendedName>
        <fullName>Zygotic DNA replication licensing factor mcm6-B</fullName>
        <ecNumber>3.6.4.12</ecNumber>
    </recommendedName>
    <alternativeName>
        <fullName>Zygotic minichromosome maintenance protein 6-B</fullName>
        <shortName>zMCM6-B</shortName>
        <shortName>zMCM6b</shortName>
    </alternativeName>
</protein>
<dbReference type="EC" id="3.6.4.12"/>
<dbReference type="EMBL" id="AF031139">
    <property type="protein sequence ID" value="AAC41267.1"/>
    <property type="molecule type" value="mRNA"/>
</dbReference>
<dbReference type="EMBL" id="BC044019">
    <property type="protein sequence ID" value="AAH44019.1"/>
    <property type="molecule type" value="mRNA"/>
</dbReference>
<dbReference type="SMR" id="Q7ZY18"/>
<dbReference type="ComplexPortal" id="CPX-2943">
    <property type="entry name" value="MCM complex"/>
</dbReference>
<dbReference type="IntAct" id="Q7ZY18">
    <property type="interactions" value="4"/>
</dbReference>
<dbReference type="DNASU" id="380282"/>
<dbReference type="GeneID" id="380282"/>
<dbReference type="KEGG" id="xla:380282"/>
<dbReference type="AGR" id="Xenbase:XB-GENE-6256556"/>
<dbReference type="CTD" id="380282"/>
<dbReference type="Xenbase" id="XB-GENE-6256556">
    <property type="gene designation" value="mcm6.S"/>
</dbReference>
<dbReference type="OMA" id="RHQQTDK"/>
<dbReference type="OrthoDB" id="1744952at2759"/>
<dbReference type="Proteomes" id="UP000186698">
    <property type="component" value="Chromosome 9_10S"/>
</dbReference>
<dbReference type="Bgee" id="380282">
    <property type="expression patterns" value="Expressed in neurula embryo and 18 other cell types or tissues"/>
</dbReference>
<dbReference type="GO" id="GO:0042555">
    <property type="term" value="C:MCM complex"/>
    <property type="evidence" value="ECO:0000353"/>
    <property type="project" value="UniProtKB"/>
</dbReference>
<dbReference type="GO" id="GO:0005634">
    <property type="term" value="C:nucleus"/>
    <property type="evidence" value="ECO:0000318"/>
    <property type="project" value="GO_Central"/>
</dbReference>
<dbReference type="GO" id="GO:0005524">
    <property type="term" value="F:ATP binding"/>
    <property type="evidence" value="ECO:0007669"/>
    <property type="project" value="UniProtKB-KW"/>
</dbReference>
<dbReference type="GO" id="GO:0016887">
    <property type="term" value="F:ATP hydrolysis activity"/>
    <property type="evidence" value="ECO:0007669"/>
    <property type="project" value="RHEA"/>
</dbReference>
<dbReference type="GO" id="GO:1990518">
    <property type="term" value="F:single-stranded 3'-5' DNA helicase activity"/>
    <property type="evidence" value="ECO:0007669"/>
    <property type="project" value="TreeGrafter"/>
</dbReference>
<dbReference type="GO" id="GO:0003697">
    <property type="term" value="F:single-stranded DNA binding"/>
    <property type="evidence" value="ECO:0000318"/>
    <property type="project" value="GO_Central"/>
</dbReference>
<dbReference type="GO" id="GO:0008270">
    <property type="term" value="F:zinc ion binding"/>
    <property type="evidence" value="ECO:0007669"/>
    <property type="project" value="UniProtKB-KW"/>
</dbReference>
<dbReference type="GO" id="GO:0006260">
    <property type="term" value="P:DNA replication"/>
    <property type="evidence" value="ECO:0000318"/>
    <property type="project" value="GO_Central"/>
</dbReference>
<dbReference type="GO" id="GO:0006270">
    <property type="term" value="P:DNA replication initiation"/>
    <property type="evidence" value="ECO:0007669"/>
    <property type="project" value="InterPro"/>
</dbReference>
<dbReference type="GO" id="GO:0000727">
    <property type="term" value="P:double-strand break repair via break-induced replication"/>
    <property type="evidence" value="ECO:0000318"/>
    <property type="project" value="GO_Central"/>
</dbReference>
<dbReference type="GO" id="GO:1902969">
    <property type="term" value="P:mitotic DNA replication"/>
    <property type="evidence" value="ECO:0000318"/>
    <property type="project" value="GO_Central"/>
</dbReference>
<dbReference type="GO" id="GO:0006279">
    <property type="term" value="P:premeiotic DNA replication"/>
    <property type="evidence" value="ECO:0000314"/>
    <property type="project" value="ComplexPortal"/>
</dbReference>
<dbReference type="GO" id="GO:0030174">
    <property type="term" value="P:regulation of DNA-templated DNA replication initiation"/>
    <property type="evidence" value="ECO:0000305"/>
    <property type="project" value="UniProtKB"/>
</dbReference>
<dbReference type="CDD" id="cd17757">
    <property type="entry name" value="MCM6"/>
    <property type="match status" value="1"/>
</dbReference>
<dbReference type="FunFam" id="1.20.58.870:FF:000001">
    <property type="entry name" value="DNA helicase"/>
    <property type="match status" value="1"/>
</dbReference>
<dbReference type="FunFam" id="2.20.28.10:FF:000003">
    <property type="entry name" value="DNA helicase"/>
    <property type="match status" value="1"/>
</dbReference>
<dbReference type="FunFam" id="2.40.50.140:FF:000091">
    <property type="entry name" value="DNA helicase"/>
    <property type="match status" value="1"/>
</dbReference>
<dbReference type="FunFam" id="3.30.1640.10:FF:000004">
    <property type="entry name" value="DNA helicase"/>
    <property type="match status" value="1"/>
</dbReference>
<dbReference type="FunFam" id="3.40.50.300:FF:000115">
    <property type="entry name" value="DNA helicase"/>
    <property type="match status" value="1"/>
</dbReference>
<dbReference type="Gene3D" id="1.20.58.870">
    <property type="match status" value="1"/>
</dbReference>
<dbReference type="Gene3D" id="2.20.28.10">
    <property type="match status" value="1"/>
</dbReference>
<dbReference type="Gene3D" id="3.30.1640.10">
    <property type="entry name" value="mini-chromosome maintenance (MCM) complex, chain A, domain 1"/>
    <property type="match status" value="1"/>
</dbReference>
<dbReference type="Gene3D" id="2.40.50.140">
    <property type="entry name" value="Nucleic acid-binding proteins"/>
    <property type="match status" value="1"/>
</dbReference>
<dbReference type="Gene3D" id="3.40.50.300">
    <property type="entry name" value="P-loop containing nucleotide triphosphate hydrolases"/>
    <property type="match status" value="1"/>
</dbReference>
<dbReference type="InterPro" id="IPR031327">
    <property type="entry name" value="MCM"/>
</dbReference>
<dbReference type="InterPro" id="IPR008049">
    <property type="entry name" value="MCM6"/>
</dbReference>
<dbReference type="InterPro" id="IPR041024">
    <property type="entry name" value="Mcm6_C"/>
</dbReference>
<dbReference type="InterPro" id="IPR018525">
    <property type="entry name" value="MCM_CS"/>
</dbReference>
<dbReference type="InterPro" id="IPR001208">
    <property type="entry name" value="MCM_dom"/>
</dbReference>
<dbReference type="InterPro" id="IPR041562">
    <property type="entry name" value="MCM_lid"/>
</dbReference>
<dbReference type="InterPro" id="IPR027925">
    <property type="entry name" value="MCM_N"/>
</dbReference>
<dbReference type="InterPro" id="IPR033762">
    <property type="entry name" value="MCM_OB"/>
</dbReference>
<dbReference type="InterPro" id="IPR012340">
    <property type="entry name" value="NA-bd_OB-fold"/>
</dbReference>
<dbReference type="InterPro" id="IPR027417">
    <property type="entry name" value="P-loop_NTPase"/>
</dbReference>
<dbReference type="PANTHER" id="PTHR11630">
    <property type="entry name" value="DNA REPLICATION LICENSING FACTOR MCM FAMILY MEMBER"/>
    <property type="match status" value="1"/>
</dbReference>
<dbReference type="PANTHER" id="PTHR11630:SF73">
    <property type="entry name" value="DNA REPLICATION LICENSING FACTOR MCM6"/>
    <property type="match status" value="1"/>
</dbReference>
<dbReference type="Pfam" id="PF00493">
    <property type="entry name" value="MCM"/>
    <property type="match status" value="1"/>
</dbReference>
<dbReference type="Pfam" id="PF18263">
    <property type="entry name" value="MCM6_C"/>
    <property type="match status" value="1"/>
</dbReference>
<dbReference type="Pfam" id="PF17855">
    <property type="entry name" value="MCM_lid"/>
    <property type="match status" value="1"/>
</dbReference>
<dbReference type="Pfam" id="PF14551">
    <property type="entry name" value="MCM_N"/>
    <property type="match status" value="1"/>
</dbReference>
<dbReference type="Pfam" id="PF17207">
    <property type="entry name" value="MCM_OB"/>
    <property type="match status" value="1"/>
</dbReference>
<dbReference type="PRINTS" id="PR01657">
    <property type="entry name" value="MCMFAMILY"/>
</dbReference>
<dbReference type="PRINTS" id="PR01662">
    <property type="entry name" value="MCMPROTEIN6"/>
</dbReference>
<dbReference type="SMART" id="SM00350">
    <property type="entry name" value="MCM"/>
    <property type="match status" value="1"/>
</dbReference>
<dbReference type="SUPFAM" id="SSF50249">
    <property type="entry name" value="Nucleic acid-binding proteins"/>
    <property type="match status" value="1"/>
</dbReference>
<dbReference type="SUPFAM" id="SSF52540">
    <property type="entry name" value="P-loop containing nucleoside triphosphate hydrolases"/>
    <property type="match status" value="1"/>
</dbReference>
<dbReference type="PROSITE" id="PS00847">
    <property type="entry name" value="MCM_1"/>
    <property type="match status" value="1"/>
</dbReference>
<dbReference type="PROSITE" id="PS50051">
    <property type="entry name" value="MCM_2"/>
    <property type="match status" value="1"/>
</dbReference>
<keyword id="KW-0067">ATP-binding</keyword>
<keyword id="KW-0131">Cell cycle</keyword>
<keyword id="KW-0235">DNA replication</keyword>
<keyword id="KW-0238">DNA-binding</keyword>
<keyword id="KW-0347">Helicase</keyword>
<keyword id="KW-0378">Hydrolase</keyword>
<keyword id="KW-0479">Metal-binding</keyword>
<keyword id="KW-0547">Nucleotide-binding</keyword>
<keyword id="KW-0539">Nucleus</keyword>
<keyword id="KW-1185">Reference proteome</keyword>
<keyword id="KW-0862">Zinc</keyword>
<keyword id="KW-0863">Zinc-finger</keyword>
<comment type="function">
    <text>Acts as a component of the mcm2-7 complex (mcm complex) which is the putative replicative helicase essential for 'once per cell cycle' DNA replication initiation and elongation in eukaryotic cells. The active ATPase sites in the mcm2-7 ring are formed through the interaction surfaces of two neighboring subunits such that a critical structure of a conserved arginine finger motif is provided in trans relative to the ATP-binding site of the Walker A box of the adjacent subunit. The six ATPase active sites, however, are likely to contribute differentially to the complex helicase activity. The existence of maternal and zygotic forms of mcm3 and mcm6 suggests that specific forms of mcm2-7 complexes may be used during different stages of development. May replace mmcm6 in the mcm2-7 complex.</text>
</comment>
<comment type="catalytic activity">
    <reaction>
        <text>ATP + H2O = ADP + phosphate + H(+)</text>
        <dbReference type="Rhea" id="RHEA:13065"/>
        <dbReference type="ChEBI" id="CHEBI:15377"/>
        <dbReference type="ChEBI" id="CHEBI:15378"/>
        <dbReference type="ChEBI" id="CHEBI:30616"/>
        <dbReference type="ChEBI" id="CHEBI:43474"/>
        <dbReference type="ChEBI" id="CHEBI:456216"/>
        <dbReference type="EC" id="3.6.4.12"/>
    </reaction>
</comment>
<comment type="subunit">
    <text evidence="4">Component of the mcm2-7 complex (RLF-M). The complex forms a toroidal hexameric ring with the proposed subunit order mcm2-mcm6-mcm4-mcm7-mcm3-mcm5 (By simililarity). Begins to associate with zmcm3, mcm4 and mcm7 into mcm complexes at the neurula stage.</text>
</comment>
<comment type="subcellular location">
    <subcellularLocation>
        <location evidence="1">Nucleus</location>
    </subcellularLocation>
    <text evidence="1">Associated with chromatin before the formation of nuclei and detaches from it as DNA replication progresses.</text>
</comment>
<comment type="developmental stage">
    <text evidence="4">Expressed zygotically. Expression begins after the midblastula transition (MBT) at the neurula stage.</text>
</comment>
<comment type="similarity">
    <text evidence="2">Belongs to the MCM family.</text>
</comment>
<name>MC6ZB_XENLA</name>
<gene>
    <name type="primary">zmcm6-b</name>
    <name evidence="5" type="synonym">zmcm6b</name>
</gene>
<proteinExistence type="evidence at protein level"/>
<feature type="chain" id="PRO_0000235885" description="Zygotic DNA replication licensing factor mcm6-B">
    <location>
        <begin position="1"/>
        <end position="825"/>
    </location>
</feature>
<feature type="domain" description="MCM" evidence="2">
    <location>
        <begin position="347"/>
        <end position="554"/>
    </location>
</feature>
<feature type="zinc finger region" description="C4-type" evidence="2">
    <location>
        <begin position="159"/>
        <end position="186"/>
    </location>
</feature>
<feature type="region of interest" description="Disordered" evidence="3">
    <location>
        <begin position="668"/>
        <end position="690"/>
    </location>
</feature>
<feature type="short sequence motif" description="Arginine finger">
    <location>
        <begin position="529"/>
        <end position="532"/>
    </location>
</feature>
<feature type="compositionally biased region" description="Acidic residues" evidence="3">
    <location>
        <begin position="668"/>
        <end position="679"/>
    </location>
</feature>
<feature type="binding site" evidence="2">
    <location>
        <begin position="397"/>
        <end position="404"/>
    </location>
    <ligand>
        <name>ATP</name>
        <dbReference type="ChEBI" id="CHEBI:30616"/>
    </ligand>
</feature>
<feature type="sequence conflict" description="In Ref. 1; AAC41267." evidence="6" ref="1">
    <original>A</original>
    <variation>T</variation>
    <location>
        <position position="550"/>
    </location>
</feature>
<feature type="sequence conflict" description="In Ref. 1; AAC41267." evidence="6" ref="1">
    <original>R</original>
    <variation>K</variation>
    <location>
        <position position="581"/>
    </location>
</feature>
<feature type="sequence conflict" description="In Ref. 1; AAC41267." evidence="6" ref="1">
    <original>E</original>
    <variation>A</variation>
    <location>
        <position position="793"/>
    </location>
</feature>
<feature type="sequence conflict" description="In Ref. 1; AAC41267." evidence="6" ref="1">
    <location>
        <position position="810"/>
    </location>
</feature>
<reference evidence="6 7" key="1">
    <citation type="journal article" date="1998" name="Curr. Biol.">
        <title>Developmental regulation of MCM replication factors in Xenopus laevis.</title>
        <authorList>
            <person name="Sible J.C."/>
            <person name="Erikson E."/>
            <person name="Hendrickson M."/>
            <person name="Maller J.L."/>
            <person name="Gautier J."/>
        </authorList>
    </citation>
    <scope>NUCLEOTIDE SEQUENCE [MRNA]</scope>
    <scope>IDENTIFICATION IN A COMPLEX WITH ZMCM3; MCM4 AND MCM7</scope>
    <scope>DEVELOPMENTAL STAGE</scope>
    <source>
        <tissue evidence="4">Embryo</tissue>
    </source>
</reference>
<reference evidence="8" key="2">
    <citation type="submission" date="2003-01" db="EMBL/GenBank/DDBJ databases">
        <authorList>
            <consortium name="NIH - Xenopus Gene Collection (XGC) project"/>
        </authorList>
    </citation>
    <scope>NUCLEOTIDE SEQUENCE [LARGE SCALE MRNA]</scope>
    <source>
        <tissue evidence="8">Embryo</tissue>
    </source>
</reference>
<accession>Q7ZY18</accession>
<accession>O73710</accession>
<sequence>MDLVDPSQSAAAAAGTQLVKDEVAEKCQKLFQDFLEEFRGSDGELKYQSDAEELIRPERNTLLVSFVDLEQFNQQLATTIQEEFYRVYPYLCRAVKAFARDHGNIPQNKEFYVAFQELPTRHKIRELTTPRIGSLLRISGQVVRTHPVHPELVSGTFLCLDCQTLVRDVEQQFKYTQPSICRNPVCANRKRFMLDTNKSRFVDFQKVRIQETQAELPRGSIPRSVEVILRAEAVESCQAGDRCDFTGSLIVVPDISQLSTPGVRAETSSRVGGREGYEAEGVQGLRALGVRDLSYKLVFLACYVCPTNPRFGGKDLHEEDMTAESIKNQMSVKEWEKVFEMSQDKNLYHNLCTSLFPTVHGNDEVKRGILLMLFGGVPKSTMEGTSLRGDINVCVVGDPSTAKSQFLKHVEEFSPRAVYTSGKASTAAGLTAAVVRDEESHEFVIEAGALMLADNGVCCIDEFDKMDTKDQVAIHEAMEQQTISITKAGVKATLNARTSILAAANPVGGRYDRAKSLKQNVNLSAPIMSRFDLFFILVDECNEVTDYAIARRIVDLHSRIEESIDRVYTLDEVRRYLLFARQFKPKISKESEDFIVEQYKRLRQRDGSGVTKSAWRITVRQLESMIRLSEGMARMHCSDEVQPKHVKEAFRLLNKSIIRVETPDVNLDQEDEHEVEEPQEGINGDADVPNGVNGHINGINGHAEETNAAPPKPSLRLNFAEYKRISNLLVLQLRKIEDEDDENETSQRKSELINWYLKEIESEIDSEEELVNRKQIIDKVIHRLVHYDQILIELIQTGLKGTEDENVAKEEDPYLVVNPNYILED</sequence>
<evidence type="ECO:0000250" key="1"/>
<evidence type="ECO:0000255" key="2"/>
<evidence type="ECO:0000256" key="3">
    <source>
        <dbReference type="SAM" id="MobiDB-lite"/>
    </source>
</evidence>
<evidence type="ECO:0000269" key="4">
    <source>
    </source>
</evidence>
<evidence type="ECO:0000303" key="5">
    <source>
    </source>
</evidence>
<evidence type="ECO:0000305" key="6"/>
<evidence type="ECO:0000312" key="7">
    <source>
        <dbReference type="EMBL" id="AAC41267.1"/>
    </source>
</evidence>
<evidence type="ECO:0000312" key="8">
    <source>
        <dbReference type="EMBL" id="AAH44019.1"/>
    </source>
</evidence>
<organism>
    <name type="scientific">Xenopus laevis</name>
    <name type="common">African clawed frog</name>
    <dbReference type="NCBI Taxonomy" id="8355"/>
    <lineage>
        <taxon>Eukaryota</taxon>
        <taxon>Metazoa</taxon>
        <taxon>Chordata</taxon>
        <taxon>Craniata</taxon>
        <taxon>Vertebrata</taxon>
        <taxon>Euteleostomi</taxon>
        <taxon>Amphibia</taxon>
        <taxon>Batrachia</taxon>
        <taxon>Anura</taxon>
        <taxon>Pipoidea</taxon>
        <taxon>Pipidae</taxon>
        <taxon>Xenopodinae</taxon>
        <taxon>Xenopus</taxon>
        <taxon>Xenopus</taxon>
    </lineage>
</organism>